<proteinExistence type="evidence at protein level"/>
<accession>A0QZY0</accession>
<accession>I7GD10</accession>
<feature type="chain" id="PRO_0000399827" description="L-cysteine:1D-myo-inositol 2-amino-2-deoxy-alpha-D-glucopyranoside ligase">
    <location>
        <begin position="1"/>
        <end position="412"/>
    </location>
</feature>
<feature type="short sequence motif" description="'HIGH' region">
    <location>
        <begin position="45"/>
        <end position="55"/>
    </location>
</feature>
<feature type="short sequence motif" description="'ERGGDP' region">
    <location>
        <begin position="187"/>
        <end position="192"/>
    </location>
</feature>
<feature type="short sequence motif" description="'KMSKS' region">
    <location>
        <begin position="289"/>
        <end position="293"/>
    </location>
</feature>
<feature type="binding site">
    <location>
        <begin position="43"/>
        <end position="46"/>
    </location>
    <ligand>
        <name>L-cysteinyl-5'-AMP</name>
        <dbReference type="ChEBI" id="CHEBI:144924"/>
    </ligand>
</feature>
<feature type="binding site" evidence="3">
    <location>
        <position position="43"/>
    </location>
    <ligand>
        <name>Zn(2+)</name>
        <dbReference type="ChEBI" id="CHEBI:29105"/>
    </ligand>
</feature>
<feature type="binding site">
    <location>
        <position position="58"/>
    </location>
    <ligand>
        <name>L-cysteinyl-5'-AMP</name>
        <dbReference type="ChEBI" id="CHEBI:144924"/>
    </ligand>
</feature>
<feature type="binding site">
    <location>
        <begin position="81"/>
        <end position="83"/>
    </location>
    <ligand>
        <name>L-cysteinyl-5'-AMP</name>
        <dbReference type="ChEBI" id="CHEBI:144924"/>
    </ligand>
</feature>
<feature type="binding site">
    <location>
        <position position="227"/>
    </location>
    <ligand>
        <name>L-cysteinyl-5'-AMP</name>
        <dbReference type="ChEBI" id="CHEBI:144924"/>
    </ligand>
</feature>
<feature type="binding site" evidence="3">
    <location>
        <position position="231"/>
    </location>
    <ligand>
        <name>Zn(2+)</name>
        <dbReference type="ChEBI" id="CHEBI:29105"/>
    </ligand>
</feature>
<feature type="binding site">
    <location>
        <begin position="249"/>
        <end position="251"/>
    </location>
    <ligand>
        <name>L-cysteinyl-5'-AMP</name>
        <dbReference type="ChEBI" id="CHEBI:144924"/>
    </ligand>
</feature>
<feature type="binding site" evidence="3">
    <location>
        <position position="256"/>
    </location>
    <ligand>
        <name>Zn(2+)</name>
        <dbReference type="ChEBI" id="CHEBI:29105"/>
    </ligand>
</feature>
<feature type="binding site">
    <location>
        <position position="283"/>
    </location>
    <ligand>
        <name>L-cysteinyl-5'-AMP</name>
        <dbReference type="ChEBI" id="CHEBI:144924"/>
    </ligand>
</feature>
<feature type="mutagenesis site" description="100-fold decrease in catalytic turnover." evidence="4">
    <original>T</original>
    <variation>V</variation>
    <location>
        <position position="46"/>
    </location>
</feature>
<feature type="mutagenesis site" description="40-fold decrease in catalytic turnover." evidence="4">
    <original>H</original>
    <variation>A</variation>
    <location>
        <position position="55"/>
    </location>
</feature>
<feature type="mutagenesis site" description="Almost no effect." evidence="4">
    <original>T</original>
    <variation>V</variation>
    <location>
        <position position="83"/>
    </location>
</feature>
<feature type="mutagenesis site" description="100-fold decrease in catalytic turnover." evidence="4">
    <original>W</original>
    <variation>F</variation>
    <variation>H</variation>
    <location>
        <position position="227"/>
    </location>
</feature>
<feature type="mutagenesis site" description="1200-fold decfrease in catalytic turnover." evidence="4">
    <original>D</original>
    <variation>A</variation>
    <location>
        <position position="251"/>
    </location>
</feature>
<feature type="mutagenesis site" description="400-fold decrease in catalytic turnover." evidence="4">
    <original>D</original>
    <variation>N</variation>
    <location>
        <position position="251"/>
    </location>
</feature>
<feature type="strand" evidence="6">
    <location>
        <begin position="20"/>
        <end position="23"/>
    </location>
</feature>
<feature type="turn" evidence="6">
    <location>
        <begin position="24"/>
        <end position="27"/>
    </location>
</feature>
<feature type="strand" evidence="6">
    <location>
        <begin position="28"/>
        <end position="31"/>
    </location>
</feature>
<feature type="strand" evidence="6">
    <location>
        <begin position="36"/>
        <end position="42"/>
    </location>
</feature>
<feature type="strand" evidence="8">
    <location>
        <begin position="47"/>
        <end position="49"/>
    </location>
</feature>
<feature type="helix" evidence="6">
    <location>
        <begin position="53"/>
        <end position="71"/>
    </location>
</feature>
<feature type="strand" evidence="6">
    <location>
        <begin position="75"/>
        <end position="82"/>
    </location>
</feature>
<feature type="helix" evidence="6">
    <location>
        <begin position="87"/>
        <end position="96"/>
    </location>
</feature>
<feature type="helix" evidence="6">
    <location>
        <begin position="100"/>
        <end position="117"/>
    </location>
</feature>
<feature type="strand" evidence="6">
    <location>
        <begin position="124"/>
        <end position="128"/>
    </location>
</feature>
<feature type="helix" evidence="6">
    <location>
        <begin position="129"/>
        <end position="131"/>
    </location>
</feature>
<feature type="helix" evidence="6">
    <location>
        <begin position="133"/>
        <end position="145"/>
    </location>
</feature>
<feature type="strand" evidence="6">
    <location>
        <begin position="148"/>
        <end position="151"/>
    </location>
</feature>
<feature type="strand" evidence="9">
    <location>
        <begin position="155"/>
        <end position="157"/>
    </location>
</feature>
<feature type="strand" evidence="6">
    <location>
        <begin position="160"/>
        <end position="162"/>
    </location>
</feature>
<feature type="helix" evidence="9">
    <location>
        <begin position="164"/>
        <end position="166"/>
    </location>
</feature>
<feature type="turn" evidence="6">
    <location>
        <begin position="168"/>
        <end position="174"/>
    </location>
</feature>
<feature type="helix" evidence="6">
    <location>
        <begin position="178"/>
        <end position="187"/>
    </location>
</feature>
<feature type="strand" evidence="6">
    <location>
        <begin position="203"/>
        <end position="208"/>
    </location>
</feature>
<feature type="strand" evidence="6">
    <location>
        <begin position="222"/>
        <end position="225"/>
    </location>
</feature>
<feature type="helix" evidence="6">
    <location>
        <begin position="227"/>
        <end position="238"/>
    </location>
</feature>
<feature type="strand" evidence="6">
    <location>
        <begin position="243"/>
        <end position="249"/>
    </location>
</feature>
<feature type="helix" evidence="6">
    <location>
        <begin position="250"/>
        <end position="252"/>
    </location>
</feature>
<feature type="turn" evidence="6">
    <location>
        <begin position="253"/>
        <end position="255"/>
    </location>
</feature>
<feature type="helix" evidence="6">
    <location>
        <begin position="256"/>
        <end position="268"/>
    </location>
</feature>
<feature type="strand" evidence="6">
    <location>
        <begin position="273"/>
        <end position="280"/>
    </location>
</feature>
<feature type="strand" evidence="7">
    <location>
        <begin position="283"/>
        <end position="285"/>
    </location>
</feature>
<feature type="helix" evidence="8">
    <location>
        <begin position="292"/>
        <end position="294"/>
    </location>
</feature>
<feature type="helix" evidence="6">
    <location>
        <begin position="300"/>
        <end position="305"/>
    </location>
</feature>
<feature type="helix" evidence="6">
    <location>
        <begin position="310"/>
        <end position="318"/>
    </location>
</feature>
<feature type="strand" evidence="7">
    <location>
        <begin position="326"/>
        <end position="328"/>
    </location>
</feature>
<feature type="helix" evidence="6">
    <location>
        <begin position="330"/>
        <end position="347"/>
    </location>
</feature>
<feature type="helix" evidence="6">
    <location>
        <begin position="356"/>
        <end position="367"/>
    </location>
</feature>
<feature type="helix" evidence="6">
    <location>
        <begin position="372"/>
        <end position="389"/>
    </location>
</feature>
<feature type="strand" evidence="6">
    <location>
        <begin position="392"/>
        <end position="395"/>
    </location>
</feature>
<feature type="helix" evidence="6">
    <location>
        <begin position="396"/>
        <end position="408"/>
    </location>
</feature>
<name>MSHC_MYCS2</name>
<sequence length="412" mass="45399">MQSWSAPAIPVVPGRGPALRLFDSADRQVRPVTPGPTATMYVCGITPYDATHLGHAATYLTFDLVHRLWLDAGHTVQYVQNVTDVDDPLFERAERDGIDWRTLGDRETQLFREDMAALRVLPPHDYVAATDAIAEVVEMVEKLLASGAAYIVEDAEYPDVYFRADATAQFGYESGYDRDTMLTLFAERGGDPDRPGKSDQLDALLWRAERPGEPSWPSPFGRGRPGWHVECSAIALTRIGTGLDIQGGGSDLIFPHHEYSAAHAESVTGERRFARHYVHTGMIGWDGHKMSKSRGNLVLVSQLRAQGVDPSAIRLGLFSGHYREDRFWSNEVLDEANARLARWRSATALPEAPDATDVIARVRQYLADDLDTPKALAALDGWCTDALSYGGHDTESPRLVATTVDALLGVDL</sequence>
<protein>
    <recommendedName>
        <fullName>L-cysteine:1D-myo-inositol 2-amino-2-deoxy-alpha-D-glucopyranoside ligase</fullName>
        <shortName>L-Cys:GlcN-Ins ligase</shortName>
        <ecNumber>6.3.1.13</ecNumber>
    </recommendedName>
    <alternativeName>
        <fullName>Mycothiol ligase</fullName>
        <shortName>MSH ligase</shortName>
    </alternativeName>
</protein>
<organism>
    <name type="scientific">Mycolicibacterium smegmatis (strain ATCC 700084 / mc(2)155)</name>
    <name type="common">Mycobacterium smegmatis</name>
    <dbReference type="NCBI Taxonomy" id="246196"/>
    <lineage>
        <taxon>Bacteria</taxon>
        <taxon>Bacillati</taxon>
        <taxon>Actinomycetota</taxon>
        <taxon>Actinomycetes</taxon>
        <taxon>Mycobacteriales</taxon>
        <taxon>Mycobacteriaceae</taxon>
        <taxon>Mycolicibacterium</taxon>
    </lineage>
</organism>
<gene>
    <name type="primary">mshC</name>
    <name type="synonym">cysS2</name>
    <name type="ordered locus">MSMEG_4189</name>
    <name type="ordered locus">MSMEI_4091</name>
</gene>
<reference key="1">
    <citation type="submission" date="2006-10" db="EMBL/GenBank/DDBJ databases">
        <authorList>
            <person name="Fleischmann R.D."/>
            <person name="Dodson R.J."/>
            <person name="Haft D.H."/>
            <person name="Merkel J.S."/>
            <person name="Nelson W.C."/>
            <person name="Fraser C.M."/>
        </authorList>
    </citation>
    <scope>NUCLEOTIDE SEQUENCE [LARGE SCALE GENOMIC DNA]</scope>
    <source>
        <strain>ATCC 700084 / mc(2)155</strain>
    </source>
</reference>
<reference key="2">
    <citation type="journal article" date="2007" name="Genome Biol.">
        <title>Interrupted coding sequences in Mycobacterium smegmatis: authentic mutations or sequencing errors?</title>
        <authorList>
            <person name="Deshayes C."/>
            <person name="Perrodou E."/>
            <person name="Gallien S."/>
            <person name="Euphrasie D."/>
            <person name="Schaeffer C."/>
            <person name="Van-Dorsselaer A."/>
            <person name="Poch O."/>
            <person name="Lecompte O."/>
            <person name="Reyrat J.-M."/>
        </authorList>
    </citation>
    <scope>NUCLEOTIDE SEQUENCE [LARGE SCALE GENOMIC DNA]</scope>
    <source>
        <strain>ATCC 700084 / mc(2)155</strain>
    </source>
</reference>
<reference key="3">
    <citation type="journal article" date="2009" name="Genome Res.">
        <title>Ortho-proteogenomics: multiple proteomes investigation through orthology and a new MS-based protocol.</title>
        <authorList>
            <person name="Gallien S."/>
            <person name="Perrodou E."/>
            <person name="Carapito C."/>
            <person name="Deshayes C."/>
            <person name="Reyrat J.-M."/>
            <person name="Van Dorsselaer A."/>
            <person name="Poch O."/>
            <person name="Schaeffer C."/>
            <person name="Lecompte O."/>
        </authorList>
    </citation>
    <scope>NUCLEOTIDE SEQUENCE [LARGE SCALE GENOMIC DNA]</scope>
    <source>
        <strain>ATCC 700084 / mc(2)155</strain>
    </source>
</reference>
<reference key="4">
    <citation type="journal article" date="2002" name="Biochemistry">
        <title>ATP-dependent L-cysteine:1D-myo-inosityl 2-amino-2-deoxy-alpha-D-glucopyranoside ligase, mycothiol biosynthesis enzyme MshC, is related to class I cysteinyl-tRNA synthetases.</title>
        <authorList>
            <person name="Sareen D."/>
            <person name="Steffek M."/>
            <person name="Newton G.L."/>
            <person name="Fahey R.C."/>
        </authorList>
    </citation>
    <scope>PROTEIN SEQUENCE OF 1-20</scope>
    <scope>CATALYTIC ACTIVITY</scope>
    <scope>BIOPHYSICOCHEMICAL PROPERTIES</scope>
</reference>
<reference key="5">
    <citation type="journal article" date="2007" name="Biochemistry">
        <title>Steady-state and pre-steady-state kinetic analysis of Mycobacterium smegmatis cysteine ligase (MshC).</title>
        <authorList>
            <person name="Fan F."/>
            <person name="Luxenburger A."/>
            <person name="Painter G.F."/>
            <person name="Blanchard J.S."/>
        </authorList>
    </citation>
    <scope>BIOPHYSICOCHEMICAL PROPERTIES</scope>
    <scope>SUBUNIT</scope>
    <scope>ENZYME KINETICS</scope>
</reference>
<reference key="6">
    <citation type="journal article" date="2009" name="Biochemistry">
        <title>Toward the catalytic mechanism of a cysteine ligase (MshC) from Mycobacterium smegmatis: an enzyme involved in the biosynthetic pathway of mycothiol.</title>
        <authorList>
            <person name="Fan F."/>
            <person name="Blanchard J.S."/>
        </authorList>
    </citation>
    <scope>MUTAGENESIS OF THR-46; HIS-55; THR-83; TRP-227 AND ASP-251</scope>
</reference>
<reference key="7">
    <citation type="journal article" date="2008" name="Biochemistry">
        <title>The 1.6 A crystal structure of Mycobacterium smegmatis MshC: the penultimate enzyme in the mycothiol biosynthetic pathway.</title>
        <authorList>
            <person name="Tremblay L.W."/>
            <person name="Fan F."/>
            <person name="Vetting M.W."/>
            <person name="Blanchard J.S."/>
        </authorList>
    </citation>
    <scope>X-RAY CRYSTALLOGRAPHY (1.6 ANGSTROMS) IN COMPLEX WITH ZINC AND CYSTEINYL ADENYLATE ANALOG</scope>
</reference>
<evidence type="ECO:0000269" key="1">
    <source>
    </source>
</evidence>
<evidence type="ECO:0000269" key="2">
    <source>
    </source>
</evidence>
<evidence type="ECO:0000269" key="3">
    <source>
    </source>
</evidence>
<evidence type="ECO:0000269" key="4">
    <source>
    </source>
</evidence>
<evidence type="ECO:0000305" key="5"/>
<evidence type="ECO:0007829" key="6">
    <source>
        <dbReference type="PDB" id="3C8Z"/>
    </source>
</evidence>
<evidence type="ECO:0007829" key="7">
    <source>
        <dbReference type="PDB" id="8HFM"/>
    </source>
</evidence>
<evidence type="ECO:0007829" key="8">
    <source>
        <dbReference type="PDB" id="8HFN"/>
    </source>
</evidence>
<evidence type="ECO:0007829" key="9">
    <source>
        <dbReference type="PDB" id="8HFO"/>
    </source>
</evidence>
<comment type="function">
    <text>Catalyzes the ATP-dependent condensation of GlcN-Ins and L-cysteine to form L-Cys-GlcN-Ins.</text>
</comment>
<comment type="catalytic activity">
    <reaction evidence="1">
        <text>1D-myo-inositol 2-amino-2-deoxy-alpha-D-glucopyranoside + L-cysteine + ATP = 1D-myo-inositol 2-(L-cysteinylamino)-2-deoxy-alpha-D-glucopyranoside + AMP + diphosphate + H(+)</text>
        <dbReference type="Rhea" id="RHEA:26176"/>
        <dbReference type="ChEBI" id="CHEBI:15378"/>
        <dbReference type="ChEBI" id="CHEBI:30616"/>
        <dbReference type="ChEBI" id="CHEBI:33019"/>
        <dbReference type="ChEBI" id="CHEBI:35235"/>
        <dbReference type="ChEBI" id="CHEBI:58886"/>
        <dbReference type="ChEBI" id="CHEBI:58887"/>
        <dbReference type="ChEBI" id="CHEBI:456215"/>
        <dbReference type="EC" id="6.3.1.13"/>
    </reaction>
</comment>
<comment type="cofactor">
    <cofactor>
        <name>Zn(2+)</name>
        <dbReference type="ChEBI" id="CHEBI:29105"/>
    </cofactor>
    <text>Binds 1 zinc ion per subunit.</text>
</comment>
<comment type="biophysicochemical properties">
    <kinetics>
        <KM evidence="1 2">40 uM for L-cysteine</KM>
        <KM evidence="1 2">72 uM for GlcN-Ins</KM>
        <KM evidence="1 2">1.84 mM for ATP</KM>
        <Vmax evidence="1 2">83.0 nmol/min/mg enzyme</Vmax>
    </kinetics>
</comment>
<comment type="subunit">
    <text evidence="2 3">Monomer.</text>
</comment>
<comment type="similarity">
    <text evidence="5">Belongs to the class-I aminoacyl-tRNA synthetase family. MshC subfamily.</text>
</comment>
<dbReference type="EC" id="6.3.1.13"/>
<dbReference type="EMBL" id="CP000480">
    <property type="protein sequence ID" value="ABK74756.1"/>
    <property type="molecule type" value="Genomic_DNA"/>
</dbReference>
<dbReference type="EMBL" id="CP001663">
    <property type="protein sequence ID" value="AFP40549.1"/>
    <property type="molecule type" value="Genomic_DNA"/>
</dbReference>
<dbReference type="RefSeq" id="WP_011729628.1">
    <property type="nucleotide sequence ID" value="NZ_SIJM01000003.1"/>
</dbReference>
<dbReference type="RefSeq" id="YP_888468.1">
    <property type="nucleotide sequence ID" value="NC_008596.1"/>
</dbReference>
<dbReference type="PDB" id="3C8Z">
    <property type="method" value="X-ray"/>
    <property type="resolution" value="1.60 A"/>
    <property type="chains" value="A/B=1-412"/>
</dbReference>
<dbReference type="PDB" id="8HFM">
    <property type="method" value="X-ray"/>
    <property type="resolution" value="2.41 A"/>
    <property type="chains" value="A=1-412"/>
</dbReference>
<dbReference type="PDB" id="8HFN">
    <property type="method" value="X-ray"/>
    <property type="resolution" value="1.98 A"/>
    <property type="chains" value="A=1-412"/>
</dbReference>
<dbReference type="PDB" id="8HFO">
    <property type="method" value="X-ray"/>
    <property type="resolution" value="2.77 A"/>
    <property type="chains" value="A=1-412"/>
</dbReference>
<dbReference type="PDBsum" id="3C8Z"/>
<dbReference type="PDBsum" id="8HFM"/>
<dbReference type="PDBsum" id="8HFN"/>
<dbReference type="PDBsum" id="8HFO"/>
<dbReference type="SMR" id="A0QZY0"/>
<dbReference type="STRING" id="246196.MSMEG_4189"/>
<dbReference type="PaxDb" id="246196-MSMEI_4091"/>
<dbReference type="GeneID" id="93458909"/>
<dbReference type="KEGG" id="msb:LJ00_20770"/>
<dbReference type="KEGG" id="msg:MSMEI_4091"/>
<dbReference type="KEGG" id="msm:MSMEG_4189"/>
<dbReference type="PATRIC" id="fig|246196.19.peg.4110"/>
<dbReference type="eggNOG" id="COG0215">
    <property type="taxonomic scope" value="Bacteria"/>
</dbReference>
<dbReference type="OrthoDB" id="9815130at2"/>
<dbReference type="BioCyc" id="MetaCyc:MONOMER-9641"/>
<dbReference type="BioCyc" id="MetaCyc:MONOMER-9682"/>
<dbReference type="BRENDA" id="6.3.1.13">
    <property type="organism ID" value="3512"/>
</dbReference>
<dbReference type="SABIO-RK" id="A0QZY0"/>
<dbReference type="EvolutionaryTrace" id="A0QZY0"/>
<dbReference type="Proteomes" id="UP000000757">
    <property type="component" value="Chromosome"/>
</dbReference>
<dbReference type="Proteomes" id="UP000006158">
    <property type="component" value="Chromosome"/>
</dbReference>
<dbReference type="GO" id="GO:0005829">
    <property type="term" value="C:cytosol"/>
    <property type="evidence" value="ECO:0007669"/>
    <property type="project" value="TreeGrafter"/>
</dbReference>
<dbReference type="GO" id="GO:0005524">
    <property type="term" value="F:ATP binding"/>
    <property type="evidence" value="ECO:0007669"/>
    <property type="project" value="UniProtKB-KW"/>
</dbReference>
<dbReference type="GO" id="GO:0035446">
    <property type="term" value="F:cysteine-glucosaminylinositol ligase activity"/>
    <property type="evidence" value="ECO:0007669"/>
    <property type="project" value="UniProtKB-UniRule"/>
</dbReference>
<dbReference type="GO" id="GO:0004817">
    <property type="term" value="F:cysteine-tRNA ligase activity"/>
    <property type="evidence" value="ECO:0007669"/>
    <property type="project" value="TreeGrafter"/>
</dbReference>
<dbReference type="GO" id="GO:0008270">
    <property type="term" value="F:zinc ion binding"/>
    <property type="evidence" value="ECO:0007669"/>
    <property type="project" value="UniProtKB-UniRule"/>
</dbReference>
<dbReference type="GO" id="GO:0006423">
    <property type="term" value="P:cysteinyl-tRNA aminoacylation"/>
    <property type="evidence" value="ECO:0007669"/>
    <property type="project" value="TreeGrafter"/>
</dbReference>
<dbReference type="GO" id="GO:0010125">
    <property type="term" value="P:mycothiol biosynthetic process"/>
    <property type="evidence" value="ECO:0007669"/>
    <property type="project" value="UniProtKB-UniRule"/>
</dbReference>
<dbReference type="CDD" id="cd07955">
    <property type="entry name" value="Anticodon_Ia_Cys_like"/>
    <property type="match status" value="1"/>
</dbReference>
<dbReference type="CDD" id="cd00672">
    <property type="entry name" value="CysRS_core"/>
    <property type="match status" value="1"/>
</dbReference>
<dbReference type="FunFam" id="3.40.50.620:FF:000134">
    <property type="entry name" value="L-cysteine:1D-myo-inositol 2-amino-2-deoxy-alpha-D-glucopyranoside ligase"/>
    <property type="match status" value="1"/>
</dbReference>
<dbReference type="Gene3D" id="1.20.120.640">
    <property type="entry name" value="Anticodon-binding domain of a subclass of class I aminoacyl-tRNA synthetases"/>
    <property type="match status" value="1"/>
</dbReference>
<dbReference type="Gene3D" id="3.40.50.620">
    <property type="entry name" value="HUPs"/>
    <property type="match status" value="1"/>
</dbReference>
<dbReference type="HAMAP" id="MF_01697">
    <property type="entry name" value="MshC"/>
    <property type="match status" value="1"/>
</dbReference>
<dbReference type="InterPro" id="IPR024909">
    <property type="entry name" value="Cys-tRNA/MSH_ligase"/>
</dbReference>
<dbReference type="InterPro" id="IPR017812">
    <property type="entry name" value="Mycothiol_ligase_MshC"/>
</dbReference>
<dbReference type="InterPro" id="IPR014729">
    <property type="entry name" value="Rossmann-like_a/b/a_fold"/>
</dbReference>
<dbReference type="InterPro" id="IPR032678">
    <property type="entry name" value="tRNA-synt_1_cat_dom"/>
</dbReference>
<dbReference type="NCBIfam" id="TIGR03447">
    <property type="entry name" value="mycothiol_MshC"/>
    <property type="match status" value="1"/>
</dbReference>
<dbReference type="PANTHER" id="PTHR10890:SF3">
    <property type="entry name" value="CYSTEINE--TRNA LIGASE, CYTOPLASMIC"/>
    <property type="match status" value="1"/>
</dbReference>
<dbReference type="PANTHER" id="PTHR10890">
    <property type="entry name" value="CYSTEINYL-TRNA SYNTHETASE"/>
    <property type="match status" value="1"/>
</dbReference>
<dbReference type="Pfam" id="PF01406">
    <property type="entry name" value="tRNA-synt_1e"/>
    <property type="match status" value="1"/>
</dbReference>
<dbReference type="PRINTS" id="PR00983">
    <property type="entry name" value="TRNASYNTHCYS"/>
</dbReference>
<dbReference type="SUPFAM" id="SSF52374">
    <property type="entry name" value="Nucleotidylyl transferase"/>
    <property type="match status" value="1"/>
</dbReference>
<keyword id="KW-0002">3D-structure</keyword>
<keyword id="KW-0067">ATP-binding</keyword>
<keyword id="KW-0903">Direct protein sequencing</keyword>
<keyword id="KW-0436">Ligase</keyword>
<keyword id="KW-0479">Metal-binding</keyword>
<keyword id="KW-0547">Nucleotide-binding</keyword>
<keyword id="KW-1185">Reference proteome</keyword>
<keyword id="KW-0862">Zinc</keyword>